<reference key="1">
    <citation type="submission" date="2005-09" db="EMBL/GenBank/DDBJ databases">
        <title>Annotation of the Aspergillus terreus NIH2624 genome.</title>
        <authorList>
            <person name="Birren B.W."/>
            <person name="Lander E.S."/>
            <person name="Galagan J.E."/>
            <person name="Nusbaum C."/>
            <person name="Devon K."/>
            <person name="Henn M."/>
            <person name="Ma L.-J."/>
            <person name="Jaffe D.B."/>
            <person name="Butler J."/>
            <person name="Alvarez P."/>
            <person name="Gnerre S."/>
            <person name="Grabherr M."/>
            <person name="Kleber M."/>
            <person name="Mauceli E.W."/>
            <person name="Brockman W."/>
            <person name="Rounsley S."/>
            <person name="Young S.K."/>
            <person name="LaButti K."/>
            <person name="Pushparaj V."/>
            <person name="DeCaprio D."/>
            <person name="Crawford M."/>
            <person name="Koehrsen M."/>
            <person name="Engels R."/>
            <person name="Montgomery P."/>
            <person name="Pearson M."/>
            <person name="Howarth C."/>
            <person name="Larson L."/>
            <person name="Luoma S."/>
            <person name="White J."/>
            <person name="Alvarado L."/>
            <person name="Kodira C.D."/>
            <person name="Zeng Q."/>
            <person name="Oleary S."/>
            <person name="Yandava C."/>
            <person name="Denning D.W."/>
            <person name="Nierman W.C."/>
            <person name="Milne T."/>
            <person name="Madden K."/>
        </authorList>
    </citation>
    <scope>NUCLEOTIDE SEQUENCE [LARGE SCALE GENOMIC DNA]</scope>
    <source>
        <strain>NIH 2624 / FGSC A1156</strain>
    </source>
</reference>
<organism>
    <name type="scientific">Aspergillus terreus (strain NIH 2624 / FGSC A1156)</name>
    <dbReference type="NCBI Taxonomy" id="341663"/>
    <lineage>
        <taxon>Eukaryota</taxon>
        <taxon>Fungi</taxon>
        <taxon>Dikarya</taxon>
        <taxon>Ascomycota</taxon>
        <taxon>Pezizomycotina</taxon>
        <taxon>Eurotiomycetes</taxon>
        <taxon>Eurotiomycetidae</taxon>
        <taxon>Eurotiales</taxon>
        <taxon>Aspergillaceae</taxon>
        <taxon>Aspergillus</taxon>
        <taxon>Aspergillus subgen. Circumdati</taxon>
    </lineage>
</organism>
<protein>
    <recommendedName>
        <fullName evidence="1">Nuclear distribution protein nudF</fullName>
    </recommendedName>
    <alternativeName>
        <fullName evidence="1">Lissencephaly-1 homolog</fullName>
        <shortName evidence="1">LIS-1</shortName>
    </alternativeName>
</protein>
<feature type="chain" id="PRO_0000405071" description="Nuclear distribution protein nudF">
    <location>
        <begin position="1"/>
        <end position="446"/>
    </location>
</feature>
<feature type="domain" description="LisH" evidence="1">
    <location>
        <begin position="9"/>
        <end position="41"/>
    </location>
</feature>
<feature type="repeat" description="WD 1">
    <location>
        <begin position="113"/>
        <end position="154"/>
    </location>
</feature>
<feature type="repeat" description="WD 2">
    <location>
        <begin position="156"/>
        <end position="196"/>
    </location>
</feature>
<feature type="repeat" description="WD 3">
    <location>
        <begin position="200"/>
        <end position="240"/>
    </location>
</feature>
<feature type="repeat" description="WD 4">
    <location>
        <begin position="243"/>
        <end position="282"/>
    </location>
</feature>
<feature type="repeat" description="WD 5">
    <location>
        <begin position="285"/>
        <end position="345"/>
    </location>
</feature>
<feature type="repeat" description="WD 6">
    <location>
        <begin position="347"/>
        <end position="386"/>
    </location>
</feature>
<feature type="repeat" description="WD 7">
    <location>
        <begin position="391"/>
        <end position="430"/>
    </location>
</feature>
<feature type="repeat" description="WD 8">
    <location>
        <begin position="432"/>
        <end position="446"/>
    </location>
</feature>
<feature type="coiled-coil region" evidence="1">
    <location>
        <begin position="60"/>
        <end position="86"/>
    </location>
</feature>
<sequence>MSQILTASQAEELHKSMVAYLSSIKASQSSNTLREELGIGDNFDEATCKKYEGLLEKKWTGIARLQRKILDLESKITSLQAELDSVPSMARSKQHQDPDNWLPAQSSAHTFESHRDAITSIAFHPVFTSLASGSEDCTIKIWDWELGELERTLKGHMRGVSGLDFGGQKGHTLLASCSGDLTIKLWDPSKDYANIRTLHGHDHSVSAVRFLTSTENLLVSASRDASIRIWDVSTGYCVRTITSNSIWFLDVSPSFDGKWLVAGGRDQAVTVWEVSSAEPRAALLGHDNDVQCCVFAPPASYEYLATLAGHKKAPLASSSSEFIATGSRDKTIKLWEARGRLIKTLVGHDNWIRGLVFHPSGKYLFSVSDDKTIRCWDLSQEGRLVKTISNAHGHFISCIRWAPPPRNAAAEASETTNGVSKKAPTKPAFQCVIATGSADSCVRVFK</sequence>
<accession>Q0D0X6</accession>
<evidence type="ECO:0000255" key="1">
    <source>
        <dbReference type="HAMAP-Rule" id="MF_03141"/>
    </source>
</evidence>
<name>LIS1_ASPTN</name>
<dbReference type="EMBL" id="CH476594">
    <property type="protein sequence ID" value="EAU39054.1"/>
    <property type="molecule type" value="Genomic_DNA"/>
</dbReference>
<dbReference type="RefSeq" id="XP_001210494.1">
    <property type="nucleotide sequence ID" value="XM_001210494.1"/>
</dbReference>
<dbReference type="SMR" id="Q0D0X6"/>
<dbReference type="STRING" id="341663.Q0D0X6"/>
<dbReference type="EnsemblFungi" id="EAU39054">
    <property type="protein sequence ID" value="EAU39054"/>
    <property type="gene ID" value="ATEG_00408"/>
</dbReference>
<dbReference type="GeneID" id="4355162"/>
<dbReference type="VEuPathDB" id="FungiDB:ATEG_00408"/>
<dbReference type="eggNOG" id="KOG0295">
    <property type="taxonomic scope" value="Eukaryota"/>
</dbReference>
<dbReference type="HOGENOM" id="CLU_000288_57_15_1"/>
<dbReference type="OMA" id="CIRWAPP"/>
<dbReference type="OrthoDB" id="10264588at2759"/>
<dbReference type="Proteomes" id="UP000007963">
    <property type="component" value="Unassembled WGS sequence"/>
</dbReference>
<dbReference type="GO" id="GO:0005737">
    <property type="term" value="C:cytoplasm"/>
    <property type="evidence" value="ECO:0007669"/>
    <property type="project" value="UniProtKB-UniRule"/>
</dbReference>
<dbReference type="GO" id="GO:0005874">
    <property type="term" value="C:microtubule"/>
    <property type="evidence" value="ECO:0007669"/>
    <property type="project" value="UniProtKB-KW"/>
</dbReference>
<dbReference type="GO" id="GO:0005875">
    <property type="term" value="C:microtubule associated complex"/>
    <property type="evidence" value="ECO:0007669"/>
    <property type="project" value="UniProtKB-UniRule"/>
</dbReference>
<dbReference type="GO" id="GO:0000922">
    <property type="term" value="C:spindle pole"/>
    <property type="evidence" value="ECO:0007669"/>
    <property type="project" value="UniProtKB-SubCell"/>
</dbReference>
<dbReference type="GO" id="GO:0070840">
    <property type="term" value="F:dynein complex binding"/>
    <property type="evidence" value="ECO:0007669"/>
    <property type="project" value="UniProtKB-UniRule"/>
</dbReference>
<dbReference type="GO" id="GO:0051301">
    <property type="term" value="P:cell division"/>
    <property type="evidence" value="ECO:0007669"/>
    <property type="project" value="UniProtKB-KW"/>
</dbReference>
<dbReference type="GO" id="GO:0000132">
    <property type="term" value="P:establishment of mitotic spindle orientation"/>
    <property type="evidence" value="ECO:0007669"/>
    <property type="project" value="UniProtKB-UniRule"/>
</dbReference>
<dbReference type="GO" id="GO:0051012">
    <property type="term" value="P:microtubule sliding"/>
    <property type="evidence" value="ECO:0007669"/>
    <property type="project" value="UniProtKB-UniRule"/>
</dbReference>
<dbReference type="CDD" id="cd00200">
    <property type="entry name" value="WD40"/>
    <property type="match status" value="1"/>
</dbReference>
<dbReference type="FunFam" id="2.130.10.10:FF:000342">
    <property type="entry name" value="Nuclear distribution protein PAC1"/>
    <property type="match status" value="1"/>
</dbReference>
<dbReference type="FunFam" id="1.20.960.30:FF:000002">
    <property type="entry name" value="Platelet-activating factor acetylhydrolase ib"/>
    <property type="match status" value="1"/>
</dbReference>
<dbReference type="Gene3D" id="1.20.960.30">
    <property type="match status" value="1"/>
</dbReference>
<dbReference type="Gene3D" id="2.130.10.10">
    <property type="entry name" value="YVTN repeat-like/Quinoprotein amine dehydrogenase"/>
    <property type="match status" value="1"/>
</dbReference>
<dbReference type="HAMAP" id="MF_03141">
    <property type="entry name" value="lis1"/>
    <property type="match status" value="1"/>
</dbReference>
<dbReference type="InterPro" id="IPR017252">
    <property type="entry name" value="Dynein_regulator_LIS1"/>
</dbReference>
<dbReference type="InterPro" id="IPR020472">
    <property type="entry name" value="G-protein_beta_WD-40_rep"/>
</dbReference>
<dbReference type="InterPro" id="IPR037190">
    <property type="entry name" value="LIS1_N"/>
</dbReference>
<dbReference type="InterPro" id="IPR056795">
    <property type="entry name" value="PAC1-like_LisH-like_dom"/>
</dbReference>
<dbReference type="InterPro" id="IPR015943">
    <property type="entry name" value="WD40/YVTN_repeat-like_dom_sf"/>
</dbReference>
<dbReference type="InterPro" id="IPR019775">
    <property type="entry name" value="WD40_repeat_CS"/>
</dbReference>
<dbReference type="InterPro" id="IPR036322">
    <property type="entry name" value="WD40_repeat_dom_sf"/>
</dbReference>
<dbReference type="InterPro" id="IPR001680">
    <property type="entry name" value="WD40_rpt"/>
</dbReference>
<dbReference type="PANTHER" id="PTHR19848:SF8">
    <property type="entry name" value="F-BOX AND WD REPEAT DOMAIN CONTAINING 7"/>
    <property type="match status" value="1"/>
</dbReference>
<dbReference type="PANTHER" id="PTHR19848">
    <property type="entry name" value="WD40 REPEAT PROTEIN"/>
    <property type="match status" value="1"/>
</dbReference>
<dbReference type="Pfam" id="PF24951">
    <property type="entry name" value="LisH_PAC1"/>
    <property type="match status" value="1"/>
</dbReference>
<dbReference type="Pfam" id="PF00400">
    <property type="entry name" value="WD40"/>
    <property type="match status" value="6"/>
</dbReference>
<dbReference type="PIRSF" id="PIRSF037647">
    <property type="entry name" value="Dynein_regulator_Lis1"/>
    <property type="match status" value="1"/>
</dbReference>
<dbReference type="PRINTS" id="PR00320">
    <property type="entry name" value="GPROTEINBRPT"/>
</dbReference>
<dbReference type="SMART" id="SM00320">
    <property type="entry name" value="WD40"/>
    <property type="match status" value="7"/>
</dbReference>
<dbReference type="SUPFAM" id="SSF109925">
    <property type="entry name" value="Lissencephaly-1 protein (Lis-1, PAF-AH alpha) N-terminal domain"/>
    <property type="match status" value="1"/>
</dbReference>
<dbReference type="SUPFAM" id="SSF50978">
    <property type="entry name" value="WD40 repeat-like"/>
    <property type="match status" value="1"/>
</dbReference>
<dbReference type="PROSITE" id="PS00678">
    <property type="entry name" value="WD_REPEATS_1"/>
    <property type="match status" value="3"/>
</dbReference>
<dbReference type="PROSITE" id="PS50082">
    <property type="entry name" value="WD_REPEATS_2"/>
    <property type="match status" value="6"/>
</dbReference>
<dbReference type="PROSITE" id="PS50294">
    <property type="entry name" value="WD_REPEATS_REGION"/>
    <property type="match status" value="1"/>
</dbReference>
<proteinExistence type="inferred from homology"/>
<comment type="function">
    <text evidence="1">Positively regulates the activity of the minus-end directed microtubule motor protein dynein. May enhance dynein-mediated microtubule sliding by targeting dynein to the microtubule plus end. Required for nuclear migration during vegetative growth as well as development. Required for retrograde early endosome (EE) transport from the hyphal tip. Required for localization of dynein to the mitotic spindle poles. Recruits additional proteins to the dynein complex at SPBs.</text>
</comment>
<comment type="subunit">
    <text evidence="1">Self-associates. Interacts with nudE and dynein.</text>
</comment>
<comment type="subcellular location">
    <subcellularLocation>
        <location evidence="1">Cytoplasm</location>
        <location evidence="1">Cytoskeleton</location>
    </subcellularLocation>
    <subcellularLocation>
        <location evidence="1">Cytoplasm</location>
        <location evidence="1">Cytoskeleton</location>
        <location evidence="1">Spindle pole</location>
    </subcellularLocation>
    <text evidence="1">Localizes to the plus ends of microtubules at the hyphal tip and the mitotic spindle poles.</text>
</comment>
<comment type="domain">
    <text evidence="1">Dimerization mediated by the LisH domain may be required to activate dynein.</text>
</comment>
<comment type="similarity">
    <text evidence="1">Belongs to the WD repeat LIS1/nudF family.</text>
</comment>
<gene>
    <name evidence="1" type="primary">nudF</name>
    <name evidence="1" type="synonym">lis1</name>
    <name type="ORF">ATEG_00408</name>
</gene>
<keyword id="KW-0131">Cell cycle</keyword>
<keyword id="KW-0132">Cell division</keyword>
<keyword id="KW-0175">Coiled coil</keyword>
<keyword id="KW-0963">Cytoplasm</keyword>
<keyword id="KW-0206">Cytoskeleton</keyword>
<keyword id="KW-0493">Microtubule</keyword>
<keyword id="KW-0498">Mitosis</keyword>
<keyword id="KW-1185">Reference proteome</keyword>
<keyword id="KW-0677">Repeat</keyword>
<keyword id="KW-0813">Transport</keyword>
<keyword id="KW-0853">WD repeat</keyword>